<accession>C5YUK3</accession>
<reference key="1">
    <citation type="journal article" date="2009" name="Nature">
        <title>The Sorghum bicolor genome and the diversification of grasses.</title>
        <authorList>
            <person name="Paterson A.H."/>
            <person name="Bowers J.E."/>
            <person name="Bruggmann R."/>
            <person name="Dubchak I."/>
            <person name="Grimwood J."/>
            <person name="Gundlach H."/>
            <person name="Haberer G."/>
            <person name="Hellsten U."/>
            <person name="Mitros T."/>
            <person name="Poliakov A."/>
            <person name="Schmutz J."/>
            <person name="Spannagl M."/>
            <person name="Tang H."/>
            <person name="Wang X."/>
            <person name="Wicker T."/>
            <person name="Bharti A.K."/>
            <person name="Chapman J."/>
            <person name="Feltus F.A."/>
            <person name="Gowik U."/>
            <person name="Grigoriev I.V."/>
            <person name="Lyons E."/>
            <person name="Maher C.A."/>
            <person name="Martis M."/>
            <person name="Narechania A."/>
            <person name="Otillar R.P."/>
            <person name="Penning B.W."/>
            <person name="Salamov A.A."/>
            <person name="Wang Y."/>
            <person name="Zhang L."/>
            <person name="Carpita N.C."/>
            <person name="Freeling M."/>
            <person name="Gingle A.R."/>
            <person name="Hash C.T."/>
            <person name="Keller B."/>
            <person name="Klein P."/>
            <person name="Kresovich S."/>
            <person name="McCann M.C."/>
            <person name="Ming R."/>
            <person name="Peterson D.G."/>
            <person name="Mehboob-ur-Rahman M."/>
            <person name="Ware D."/>
            <person name="Westhoff P."/>
            <person name="Mayer K.F.X."/>
            <person name="Messing J."/>
            <person name="Rokhsar D.S."/>
        </authorList>
    </citation>
    <scope>NUCLEOTIDE SEQUENCE [LARGE SCALE GENOMIC DNA]</scope>
    <source>
        <strain>cv. BTx623</strain>
    </source>
</reference>
<reference key="2">
    <citation type="journal article" date="2018" name="Plant J.">
        <title>The Sorghum bicolor reference genome: improved assembly, gene annotations, a transcriptome atlas, and signatures of genome organization.</title>
        <authorList>
            <person name="McCormick R.F."/>
            <person name="Truong S.K."/>
            <person name="Sreedasyam A."/>
            <person name="Jenkins J."/>
            <person name="Shu S."/>
            <person name="Sims D."/>
            <person name="Kennedy M."/>
            <person name="Amirebrahimi M."/>
            <person name="Weers B.D."/>
            <person name="McKinley B."/>
            <person name="Mattison A."/>
            <person name="Morishige D.T."/>
            <person name="Grimwood J."/>
            <person name="Schmutz J."/>
            <person name="Mullet J.E."/>
        </authorList>
    </citation>
    <scope>GENOME REANNOTATION</scope>
    <source>
        <strain>cv. BTx623</strain>
    </source>
</reference>
<name>FEN11_SORBI</name>
<proteinExistence type="inferred from homology"/>
<feature type="chain" id="PRO_0000403528" description="Flap endonuclease 1-A">
    <location>
        <begin position="1"/>
        <end position="380"/>
    </location>
</feature>
<feature type="region of interest" description="N-domain">
    <location>
        <begin position="1"/>
        <end position="105"/>
    </location>
</feature>
<feature type="region of interest" description="I-domain">
    <location>
        <begin position="123"/>
        <end position="254"/>
    </location>
</feature>
<feature type="region of interest" description="Interaction with PCNA" evidence="1">
    <location>
        <begin position="336"/>
        <end position="344"/>
    </location>
</feature>
<feature type="region of interest" description="Disordered" evidence="2">
    <location>
        <begin position="351"/>
        <end position="380"/>
    </location>
</feature>
<feature type="compositionally biased region" description="Basic and acidic residues" evidence="2">
    <location>
        <begin position="355"/>
        <end position="364"/>
    </location>
</feature>
<feature type="compositionally biased region" description="Basic residues" evidence="2">
    <location>
        <begin position="371"/>
        <end position="380"/>
    </location>
</feature>
<feature type="binding site" evidence="1">
    <location>
        <position position="34"/>
    </location>
    <ligand>
        <name>Mg(2+)</name>
        <dbReference type="ChEBI" id="CHEBI:18420"/>
        <label>1</label>
    </ligand>
</feature>
<feature type="binding site" evidence="1">
    <location>
        <position position="71"/>
    </location>
    <ligand>
        <name>DNA</name>
        <dbReference type="ChEBI" id="CHEBI:16991"/>
    </ligand>
</feature>
<feature type="binding site" evidence="1">
    <location>
        <position position="87"/>
    </location>
    <ligand>
        <name>Mg(2+)</name>
        <dbReference type="ChEBI" id="CHEBI:18420"/>
        <label>1</label>
    </ligand>
</feature>
<feature type="binding site" evidence="1">
    <location>
        <position position="159"/>
    </location>
    <ligand>
        <name>DNA</name>
        <dbReference type="ChEBI" id="CHEBI:16991"/>
    </ligand>
</feature>
<feature type="binding site" evidence="1">
    <location>
        <position position="159"/>
    </location>
    <ligand>
        <name>Mg(2+)</name>
        <dbReference type="ChEBI" id="CHEBI:18420"/>
        <label>1</label>
    </ligand>
</feature>
<feature type="binding site" evidence="1">
    <location>
        <position position="161"/>
    </location>
    <ligand>
        <name>Mg(2+)</name>
        <dbReference type="ChEBI" id="CHEBI:18420"/>
        <label>1</label>
    </ligand>
</feature>
<feature type="binding site" evidence="1">
    <location>
        <position position="180"/>
    </location>
    <ligand>
        <name>Mg(2+)</name>
        <dbReference type="ChEBI" id="CHEBI:18420"/>
        <label>2</label>
    </ligand>
</feature>
<feature type="binding site" evidence="1">
    <location>
        <position position="182"/>
    </location>
    <ligand>
        <name>Mg(2+)</name>
        <dbReference type="ChEBI" id="CHEBI:18420"/>
        <label>2</label>
    </ligand>
</feature>
<feature type="binding site" evidence="1">
    <location>
        <position position="232"/>
    </location>
    <ligand>
        <name>DNA</name>
        <dbReference type="ChEBI" id="CHEBI:16991"/>
    </ligand>
</feature>
<feature type="binding site" evidence="1">
    <location>
        <position position="234"/>
    </location>
    <ligand>
        <name>DNA</name>
        <dbReference type="ChEBI" id="CHEBI:16991"/>
    </ligand>
</feature>
<feature type="binding site" evidence="1">
    <location>
        <position position="234"/>
    </location>
    <ligand>
        <name>Mg(2+)</name>
        <dbReference type="ChEBI" id="CHEBI:18420"/>
        <label>2</label>
    </ligand>
</feature>
<gene>
    <name evidence="1" type="primary">FEN1-A</name>
    <name type="ordered locus">Sb09g026950</name>
</gene>
<protein>
    <recommendedName>
        <fullName evidence="1">Flap endonuclease 1-A</fullName>
        <shortName evidence="1">FEN-1-A</shortName>
        <ecNumber evidence="1">3.1.-.-</ecNumber>
    </recommendedName>
    <alternativeName>
        <fullName evidence="1">Flap structure-specific endonuclease 1-A</fullName>
    </alternativeName>
</protein>
<dbReference type="EC" id="3.1.-.-" evidence="1"/>
<dbReference type="EMBL" id="CM000768">
    <property type="protein sequence ID" value="EES19880.1"/>
    <property type="molecule type" value="Genomic_DNA"/>
</dbReference>
<dbReference type="RefSeq" id="XP_002441450.1">
    <property type="nucleotide sequence ID" value="XM_002441405.1"/>
</dbReference>
<dbReference type="SMR" id="C5YUK3"/>
<dbReference type="FunCoup" id="C5YUK3">
    <property type="interactions" value="2333"/>
</dbReference>
<dbReference type="STRING" id="4558.C5YUK3"/>
<dbReference type="EnsemblPlants" id="OQU78366">
    <property type="protein sequence ID" value="OQU78366"/>
    <property type="gene ID" value="SORBI_3009G213950"/>
</dbReference>
<dbReference type="GeneID" id="8061074"/>
<dbReference type="Gramene" id="OQU78366">
    <property type="protein sequence ID" value="OQU78366"/>
    <property type="gene ID" value="SORBI_3009G213950"/>
</dbReference>
<dbReference type="KEGG" id="sbi:8061074"/>
<dbReference type="eggNOG" id="KOG2519">
    <property type="taxonomic scope" value="Eukaryota"/>
</dbReference>
<dbReference type="HOGENOM" id="CLU_032444_2_0_1"/>
<dbReference type="InParanoid" id="C5YUK3"/>
<dbReference type="OMA" id="MGIPWVQ"/>
<dbReference type="OrthoDB" id="1937206at2759"/>
<dbReference type="Proteomes" id="UP000000768">
    <property type="component" value="Chromosome 9"/>
</dbReference>
<dbReference type="ExpressionAtlas" id="C5YUK3">
    <property type="expression patterns" value="baseline"/>
</dbReference>
<dbReference type="GO" id="GO:0005739">
    <property type="term" value="C:mitochondrion"/>
    <property type="evidence" value="ECO:0007669"/>
    <property type="project" value="UniProtKB-SubCell"/>
</dbReference>
<dbReference type="GO" id="GO:0005730">
    <property type="term" value="C:nucleolus"/>
    <property type="evidence" value="ECO:0007669"/>
    <property type="project" value="UniProtKB-SubCell"/>
</dbReference>
<dbReference type="GO" id="GO:0005654">
    <property type="term" value="C:nucleoplasm"/>
    <property type="evidence" value="ECO:0007669"/>
    <property type="project" value="UniProtKB-SubCell"/>
</dbReference>
<dbReference type="GO" id="GO:0008409">
    <property type="term" value="F:5'-3' exonuclease activity"/>
    <property type="evidence" value="ECO:0000318"/>
    <property type="project" value="GO_Central"/>
</dbReference>
<dbReference type="GO" id="GO:0017108">
    <property type="term" value="F:5'-flap endonuclease activity"/>
    <property type="evidence" value="ECO:0000318"/>
    <property type="project" value="GO_Central"/>
</dbReference>
<dbReference type="GO" id="GO:0003677">
    <property type="term" value="F:DNA binding"/>
    <property type="evidence" value="ECO:0007669"/>
    <property type="project" value="UniProtKB-UniRule"/>
</dbReference>
<dbReference type="GO" id="GO:0000287">
    <property type="term" value="F:magnesium ion binding"/>
    <property type="evidence" value="ECO:0007669"/>
    <property type="project" value="UniProtKB-UniRule"/>
</dbReference>
<dbReference type="GO" id="GO:0006284">
    <property type="term" value="P:base-excision repair"/>
    <property type="evidence" value="ECO:0007669"/>
    <property type="project" value="UniProtKB-UniRule"/>
</dbReference>
<dbReference type="GO" id="GO:0043137">
    <property type="term" value="P:DNA replication, removal of RNA primer"/>
    <property type="evidence" value="ECO:0007669"/>
    <property type="project" value="UniProtKB-UniRule"/>
</dbReference>
<dbReference type="CDD" id="cd09907">
    <property type="entry name" value="H3TH_FEN1-Euk"/>
    <property type="match status" value="1"/>
</dbReference>
<dbReference type="CDD" id="cd09867">
    <property type="entry name" value="PIN_FEN1"/>
    <property type="match status" value="1"/>
</dbReference>
<dbReference type="FunFam" id="1.10.150.20:FF:000009">
    <property type="entry name" value="Flap endonuclease 1"/>
    <property type="match status" value="1"/>
</dbReference>
<dbReference type="FunFam" id="3.40.50.1010:FF:000015">
    <property type="entry name" value="Flap endonuclease 1"/>
    <property type="match status" value="1"/>
</dbReference>
<dbReference type="Gene3D" id="1.10.150.20">
    <property type="entry name" value="5' to 3' exonuclease, C-terminal subdomain"/>
    <property type="match status" value="1"/>
</dbReference>
<dbReference type="Gene3D" id="3.40.50.1010">
    <property type="entry name" value="5'-nuclease"/>
    <property type="match status" value="1"/>
</dbReference>
<dbReference type="HAMAP" id="MF_00614">
    <property type="entry name" value="Fen"/>
    <property type="match status" value="1"/>
</dbReference>
<dbReference type="InterPro" id="IPR002421">
    <property type="entry name" value="5-3_exonuclease"/>
</dbReference>
<dbReference type="InterPro" id="IPR036279">
    <property type="entry name" value="5-3_exonuclease_C_sf"/>
</dbReference>
<dbReference type="InterPro" id="IPR023426">
    <property type="entry name" value="Flap_endonuc"/>
</dbReference>
<dbReference type="InterPro" id="IPR008918">
    <property type="entry name" value="HhH2"/>
</dbReference>
<dbReference type="InterPro" id="IPR029060">
    <property type="entry name" value="PIN-like_dom_sf"/>
</dbReference>
<dbReference type="InterPro" id="IPR006086">
    <property type="entry name" value="XPG-I_dom"/>
</dbReference>
<dbReference type="InterPro" id="IPR006084">
    <property type="entry name" value="XPG/Rad2"/>
</dbReference>
<dbReference type="InterPro" id="IPR019974">
    <property type="entry name" value="XPG_CS"/>
</dbReference>
<dbReference type="InterPro" id="IPR006085">
    <property type="entry name" value="XPG_DNA_repair_N"/>
</dbReference>
<dbReference type="PANTHER" id="PTHR11081:SF9">
    <property type="entry name" value="FLAP ENDONUCLEASE 1"/>
    <property type="match status" value="1"/>
</dbReference>
<dbReference type="PANTHER" id="PTHR11081">
    <property type="entry name" value="FLAP ENDONUCLEASE FAMILY MEMBER"/>
    <property type="match status" value="1"/>
</dbReference>
<dbReference type="Pfam" id="PF00867">
    <property type="entry name" value="XPG_I"/>
    <property type="match status" value="1"/>
</dbReference>
<dbReference type="Pfam" id="PF00752">
    <property type="entry name" value="XPG_N"/>
    <property type="match status" value="1"/>
</dbReference>
<dbReference type="PRINTS" id="PR00853">
    <property type="entry name" value="XPGRADSUPER"/>
</dbReference>
<dbReference type="SMART" id="SM00475">
    <property type="entry name" value="53EXOc"/>
    <property type="match status" value="1"/>
</dbReference>
<dbReference type="SMART" id="SM00279">
    <property type="entry name" value="HhH2"/>
    <property type="match status" value="1"/>
</dbReference>
<dbReference type="SMART" id="SM00484">
    <property type="entry name" value="XPGI"/>
    <property type="match status" value="1"/>
</dbReference>
<dbReference type="SMART" id="SM00485">
    <property type="entry name" value="XPGN"/>
    <property type="match status" value="1"/>
</dbReference>
<dbReference type="SUPFAM" id="SSF47807">
    <property type="entry name" value="5' to 3' exonuclease, C-terminal subdomain"/>
    <property type="match status" value="1"/>
</dbReference>
<dbReference type="SUPFAM" id="SSF88723">
    <property type="entry name" value="PIN domain-like"/>
    <property type="match status" value="1"/>
</dbReference>
<dbReference type="PROSITE" id="PS00841">
    <property type="entry name" value="XPG_1"/>
    <property type="match status" value="1"/>
</dbReference>
<dbReference type="PROSITE" id="PS00842">
    <property type="entry name" value="XPG_2"/>
    <property type="match status" value="1"/>
</dbReference>
<organism>
    <name type="scientific">Sorghum bicolor</name>
    <name type="common">Sorghum</name>
    <name type="synonym">Sorghum vulgare</name>
    <dbReference type="NCBI Taxonomy" id="4558"/>
    <lineage>
        <taxon>Eukaryota</taxon>
        <taxon>Viridiplantae</taxon>
        <taxon>Streptophyta</taxon>
        <taxon>Embryophyta</taxon>
        <taxon>Tracheophyta</taxon>
        <taxon>Spermatophyta</taxon>
        <taxon>Magnoliopsida</taxon>
        <taxon>Liliopsida</taxon>
        <taxon>Poales</taxon>
        <taxon>Poaceae</taxon>
        <taxon>PACMAD clade</taxon>
        <taxon>Panicoideae</taxon>
        <taxon>Andropogonodae</taxon>
        <taxon>Andropogoneae</taxon>
        <taxon>Sorghinae</taxon>
        <taxon>Sorghum</taxon>
    </lineage>
</organism>
<sequence>MGIKGLTKLLADNAPKAMKEQKFESYFGRKIAIDASMSIYQFLIVVGRTGMETLTNEAGEVTSHLQGMFNRTIRLLEAGIKPVYVFDGKPPDMKKEELAKRFSKREDATNDLKEAVEAGDKDAVEKLSKRTVKVTAQHNDDCKRLLRLMGVPVVEAPSEAEAECAALCKNDKVFAVASEDMDSLTFGAPRFLRHLMDPSSKKIPVMEFDVAKVLEELELTMDQFIDLCILCGCDYCDSIKGIGGQTALKLIRQHGSIESILENLNKDRYQIPEDWPYQEARRLFKEPNVTLDVPELKWTPPDEEGLISFLVKDNGFNEDRVTKAIEKIKSAKNKSSQGRLESFFKPVATTSAPLKRKETSDKTSKAAAANKKTKAGGKKK</sequence>
<keyword id="KW-0227">DNA damage</keyword>
<keyword id="KW-0234">DNA repair</keyword>
<keyword id="KW-0235">DNA replication</keyword>
<keyword id="KW-0255">Endonuclease</keyword>
<keyword id="KW-0269">Exonuclease</keyword>
<keyword id="KW-0378">Hydrolase</keyword>
<keyword id="KW-0460">Magnesium</keyword>
<keyword id="KW-0479">Metal-binding</keyword>
<keyword id="KW-0496">Mitochondrion</keyword>
<keyword id="KW-0540">Nuclease</keyword>
<keyword id="KW-0539">Nucleus</keyword>
<keyword id="KW-0597">Phosphoprotein</keyword>
<keyword id="KW-1185">Reference proteome</keyword>
<evidence type="ECO:0000255" key="1">
    <source>
        <dbReference type="HAMAP-Rule" id="MF_03140"/>
    </source>
</evidence>
<evidence type="ECO:0000256" key="2">
    <source>
        <dbReference type="SAM" id="MobiDB-lite"/>
    </source>
</evidence>
<comment type="function">
    <text evidence="1">Structure-specific nuclease with 5'-flap endonuclease and 5'-3' exonuclease activities involved in DNA replication and repair. During DNA replication, cleaves the 5'-overhanging flap structure that is generated by displacement synthesis when DNA polymerase encounters the 5'-end of a downstream Okazaki fragment. It enters the flap from the 5'-end and then tracks to cleave the flap base, leaving a nick for ligation. Also involved in the long patch base excision repair (LP-BER) pathway, by cleaving within the apurinic/apyrimidinic (AP) site-terminated flap. Acts as a genome stabilization factor that prevents flaps from equilibrating into structures that lead to duplications and deletions. Also possesses 5'-3' exonuclease activity on nicked or gapped double-stranded DNA, and exhibits RNase H activity. Also involved in replication and repair of rDNA and in repairing mitochondrial DNA.</text>
</comment>
<comment type="cofactor">
    <cofactor evidence="1">
        <name>Mg(2+)</name>
        <dbReference type="ChEBI" id="CHEBI:18420"/>
    </cofactor>
    <text evidence="1">Binds 2 magnesium ions per subunit. They probably participate in the reaction catalyzed by the enzyme. May bind an additional third magnesium ion after substrate binding.</text>
</comment>
<comment type="subunit">
    <text evidence="1">Interacts with PCNA. Three molecules of FEN1 bind to one PCNA trimer with each molecule binding to one PCNA monomer. PCNA stimulates the nuclease activity without altering cleavage specificity.</text>
</comment>
<comment type="subcellular location">
    <subcellularLocation>
        <location evidence="1">Nucleus</location>
        <location evidence="1">Nucleolus</location>
    </subcellularLocation>
    <subcellularLocation>
        <location evidence="1">Nucleus</location>
        <location evidence="1">Nucleoplasm</location>
    </subcellularLocation>
    <subcellularLocation>
        <location evidence="1">Mitochondrion</location>
    </subcellularLocation>
    <text evidence="1">Resides mostly in the nucleoli and relocalizes to the nucleoplasm upon DNA damage.</text>
</comment>
<comment type="PTM">
    <text evidence="1">Phosphorylated. Phosphorylation upon DNA damage induces relocalization to the nuclear plasma.</text>
</comment>
<comment type="similarity">
    <text evidence="1">Belongs to the XPG/RAD2 endonuclease family. FEN1 subfamily.</text>
</comment>